<protein>
    <recommendedName>
        <fullName>tRNA threonylcarbamoyladenosine biosynthesis protein TsaE</fullName>
    </recommendedName>
    <alternativeName>
        <fullName>t(6)A37 threonylcarbamoyladenosine biosynthesis protein TsaE</fullName>
    </alternativeName>
</protein>
<comment type="function">
    <text evidence="1">Required for the formation of a threonylcarbamoyl group on adenosine at position 37 (t(6)A37) in tRNAs that read codons beginning with adenine. Is involved in the transfer of the threonylcarbamoyl moiety of threonylcarbamoyl-AMP (TC-AMP) to the N6 group of A37, together with TsaD and TsaB. TsaE seems to play an indirect role in the t(6)A biosynthesis pathway, possibly in regulating the core enzymatic function of TsaD (By similarity).</text>
</comment>
<comment type="subcellular location">
    <subcellularLocation>
        <location evidence="1">Cytoplasm</location>
    </subcellularLocation>
</comment>
<comment type="similarity">
    <text evidence="2">Belongs to the TsaE family.</text>
</comment>
<gene>
    <name type="primary">tsaE</name>
    <name type="ordered locus">RP013</name>
</gene>
<evidence type="ECO:0000250" key="1"/>
<evidence type="ECO:0000305" key="2"/>
<keyword id="KW-0067">ATP-binding</keyword>
<keyword id="KW-0963">Cytoplasm</keyword>
<keyword id="KW-0460">Magnesium</keyword>
<keyword id="KW-0479">Metal-binding</keyword>
<keyword id="KW-0547">Nucleotide-binding</keyword>
<keyword id="KW-1185">Reference proteome</keyword>
<keyword id="KW-0819">tRNA processing</keyword>
<feature type="chain" id="PRO_0000096217" description="tRNA threonylcarbamoyladenosine biosynthesis protein TsaE">
    <location>
        <begin position="1"/>
        <end position="144"/>
    </location>
</feature>
<feature type="binding site" evidence="1">
    <location>
        <begin position="34"/>
        <end position="39"/>
    </location>
    <ligand>
        <name>ATP</name>
        <dbReference type="ChEBI" id="CHEBI:30616"/>
    </ligand>
</feature>
<feature type="binding site" evidence="1">
    <location>
        <position position="38"/>
    </location>
    <ligand>
        <name>Mg(2+)</name>
        <dbReference type="ChEBI" id="CHEBI:18420"/>
    </ligand>
</feature>
<feature type="binding site" evidence="1">
    <location>
        <position position="104"/>
    </location>
    <ligand>
        <name>Mg(2+)</name>
        <dbReference type="ChEBI" id="CHEBI:18420"/>
    </ligand>
</feature>
<proteinExistence type="inferred from homology"/>
<name>TSAE_RICPR</name>
<sequence>MHTLNSKKETKNFAKLFAQNLKPNDIVLLNGDLGAGKTFFCREIIKHFCGKNTNIISPTFNLLQIYKTPKFNIYHYDMYRIKSPEEIYELGFEEALNGNLILIEWSEIIKHLLTPPLIEVNLKVLDNNKRLCSIHKENFLFDFL</sequence>
<accession>Q9ZED0</accession>
<dbReference type="EMBL" id="AJ235270">
    <property type="protein sequence ID" value="CAA14485.1"/>
    <property type="molecule type" value="Genomic_DNA"/>
</dbReference>
<dbReference type="PIR" id="F71708">
    <property type="entry name" value="F71708"/>
</dbReference>
<dbReference type="RefSeq" id="NP_220408.1">
    <property type="nucleotide sequence ID" value="NC_000963.1"/>
</dbReference>
<dbReference type="RefSeq" id="WP_004596691.1">
    <property type="nucleotide sequence ID" value="NC_000963.1"/>
</dbReference>
<dbReference type="SMR" id="Q9ZED0"/>
<dbReference type="STRING" id="272947.gene:17555096"/>
<dbReference type="EnsemblBacteria" id="CAA14485">
    <property type="protein sequence ID" value="CAA14485"/>
    <property type="gene ID" value="CAA14485"/>
</dbReference>
<dbReference type="GeneID" id="57569141"/>
<dbReference type="KEGG" id="rpr:RP013"/>
<dbReference type="PATRIC" id="fig|272947.5.peg.13"/>
<dbReference type="eggNOG" id="COG0802">
    <property type="taxonomic scope" value="Bacteria"/>
</dbReference>
<dbReference type="HOGENOM" id="CLU_087829_5_0_5"/>
<dbReference type="OrthoDB" id="9800307at2"/>
<dbReference type="Proteomes" id="UP000002480">
    <property type="component" value="Chromosome"/>
</dbReference>
<dbReference type="GO" id="GO:0005737">
    <property type="term" value="C:cytoplasm"/>
    <property type="evidence" value="ECO:0007669"/>
    <property type="project" value="UniProtKB-SubCell"/>
</dbReference>
<dbReference type="GO" id="GO:0005524">
    <property type="term" value="F:ATP binding"/>
    <property type="evidence" value="ECO:0007669"/>
    <property type="project" value="UniProtKB-KW"/>
</dbReference>
<dbReference type="GO" id="GO:0046872">
    <property type="term" value="F:metal ion binding"/>
    <property type="evidence" value="ECO:0007669"/>
    <property type="project" value="UniProtKB-KW"/>
</dbReference>
<dbReference type="GO" id="GO:0002949">
    <property type="term" value="P:tRNA threonylcarbamoyladenosine modification"/>
    <property type="evidence" value="ECO:0007669"/>
    <property type="project" value="InterPro"/>
</dbReference>
<dbReference type="Gene3D" id="3.40.50.300">
    <property type="entry name" value="P-loop containing nucleotide triphosphate hydrolases"/>
    <property type="match status" value="1"/>
</dbReference>
<dbReference type="InterPro" id="IPR027417">
    <property type="entry name" value="P-loop_NTPase"/>
</dbReference>
<dbReference type="InterPro" id="IPR003442">
    <property type="entry name" value="T6A_TsaE"/>
</dbReference>
<dbReference type="NCBIfam" id="TIGR00150">
    <property type="entry name" value="T6A_YjeE"/>
    <property type="match status" value="1"/>
</dbReference>
<dbReference type="PANTHER" id="PTHR33540">
    <property type="entry name" value="TRNA THREONYLCARBAMOYLADENOSINE BIOSYNTHESIS PROTEIN TSAE"/>
    <property type="match status" value="1"/>
</dbReference>
<dbReference type="PANTHER" id="PTHR33540:SF2">
    <property type="entry name" value="TRNA THREONYLCARBAMOYLADENOSINE BIOSYNTHESIS PROTEIN TSAE"/>
    <property type="match status" value="1"/>
</dbReference>
<dbReference type="Pfam" id="PF02367">
    <property type="entry name" value="TsaE"/>
    <property type="match status" value="1"/>
</dbReference>
<dbReference type="SUPFAM" id="SSF52540">
    <property type="entry name" value="P-loop containing nucleoside triphosphate hydrolases"/>
    <property type="match status" value="1"/>
</dbReference>
<organism>
    <name type="scientific">Rickettsia prowazekii (strain Madrid E)</name>
    <dbReference type="NCBI Taxonomy" id="272947"/>
    <lineage>
        <taxon>Bacteria</taxon>
        <taxon>Pseudomonadati</taxon>
        <taxon>Pseudomonadota</taxon>
        <taxon>Alphaproteobacteria</taxon>
        <taxon>Rickettsiales</taxon>
        <taxon>Rickettsiaceae</taxon>
        <taxon>Rickettsieae</taxon>
        <taxon>Rickettsia</taxon>
        <taxon>typhus group</taxon>
    </lineage>
</organism>
<reference key="1">
    <citation type="journal article" date="1998" name="Nature">
        <title>The genome sequence of Rickettsia prowazekii and the origin of mitochondria.</title>
        <authorList>
            <person name="Andersson S.G.E."/>
            <person name="Zomorodipour A."/>
            <person name="Andersson J.O."/>
            <person name="Sicheritz-Ponten T."/>
            <person name="Alsmark U.C.M."/>
            <person name="Podowski R.M."/>
            <person name="Naeslund A.K."/>
            <person name="Eriksson A.-S."/>
            <person name="Winkler H.H."/>
            <person name="Kurland C.G."/>
        </authorList>
    </citation>
    <scope>NUCLEOTIDE SEQUENCE [LARGE SCALE GENOMIC DNA]</scope>
    <source>
        <strain>Madrid E</strain>
    </source>
</reference>